<dbReference type="EMBL" id="U12980">
    <property type="protein sequence ID" value="AAC04970.1"/>
    <property type="status" value="ALT_INIT"/>
    <property type="molecule type" value="Genomic_DNA"/>
</dbReference>
<dbReference type="EMBL" id="BK006935">
    <property type="protein sequence ID" value="DAA06924.2"/>
    <property type="molecule type" value="Genomic_DNA"/>
</dbReference>
<dbReference type="PIR" id="S51958">
    <property type="entry name" value="S51958"/>
</dbReference>
<dbReference type="RefSeq" id="NP_009337.2">
    <property type="nucleotide sequence ID" value="NM_001178206.2"/>
</dbReference>
<dbReference type="BioGRID" id="31766">
    <property type="interactions" value="104"/>
</dbReference>
<dbReference type="DIP" id="DIP-3793N"/>
<dbReference type="FunCoup" id="P39711">
    <property type="interactions" value="41"/>
</dbReference>
<dbReference type="IntAct" id="P39711">
    <property type="interactions" value="2"/>
</dbReference>
<dbReference type="PaxDb" id="4932-YAL064W"/>
<dbReference type="EnsemblFungi" id="YAL064W_mRNA">
    <property type="protein sequence ID" value="YAL064W"/>
    <property type="gene ID" value="YAL064W"/>
</dbReference>
<dbReference type="GeneID" id="851235"/>
<dbReference type="KEGG" id="sce:YAL064W"/>
<dbReference type="AGR" id="SGD:S000000060"/>
<dbReference type="SGD" id="S000000060">
    <property type="gene designation" value="YAL064W"/>
</dbReference>
<dbReference type="VEuPathDB" id="FungiDB:YAL064W"/>
<dbReference type="HOGENOM" id="CLU_2387870_0_0_1"/>
<dbReference type="InParanoid" id="P39711"/>
<dbReference type="BioCyc" id="YEAST:G3O-28865-MONOMER"/>
<dbReference type="BioGRID-ORCS" id="851235">
    <property type="hits" value="0 hits in 10 CRISPR screens"/>
</dbReference>
<dbReference type="PRO" id="PR:P39711"/>
<dbReference type="Proteomes" id="UP000002311">
    <property type="component" value="Chromosome I"/>
</dbReference>
<dbReference type="RNAct" id="P39711">
    <property type="molecule type" value="protein"/>
</dbReference>
<comment type="sequence caution" evidence="1">
    <conflict type="erroneous initiation">
        <sequence resource="EMBL-CDS" id="AAC04970"/>
    </conflict>
    <text>Extended N-terminus.</text>
</comment>
<protein>
    <recommendedName>
        <fullName>Putative uncharacterized protein YAL064W</fullName>
    </recommendedName>
</protein>
<feature type="chain" id="PRO_0000202425" description="Putative uncharacterized protein YAL064W">
    <location>
        <begin position="1"/>
        <end position="94"/>
    </location>
</feature>
<accession>P39711</accession>
<accession>D6VPF4</accession>
<evidence type="ECO:0000305" key="1"/>
<gene>
    <name type="ordered locus">YAL064W</name>
</gene>
<name>YAG4_YEAST</name>
<sequence length="94" mass="11004">MNPFASLEGQDNISSVFFLHMQQFESQVKDRFRFPIFRLERKTFGNSCYQVETLKVKCRPRHAKSCNLLTLLFKSRTQSVLVPNFGFLILNSEP</sequence>
<organism>
    <name type="scientific">Saccharomyces cerevisiae (strain ATCC 204508 / S288c)</name>
    <name type="common">Baker's yeast</name>
    <dbReference type="NCBI Taxonomy" id="559292"/>
    <lineage>
        <taxon>Eukaryota</taxon>
        <taxon>Fungi</taxon>
        <taxon>Dikarya</taxon>
        <taxon>Ascomycota</taxon>
        <taxon>Saccharomycotina</taxon>
        <taxon>Saccharomycetes</taxon>
        <taxon>Saccharomycetales</taxon>
        <taxon>Saccharomycetaceae</taxon>
        <taxon>Saccharomyces</taxon>
    </lineage>
</organism>
<keyword id="KW-1185">Reference proteome</keyword>
<reference key="1">
    <citation type="journal article" date="1995" name="Proc. Natl. Acad. Sci. U.S.A.">
        <title>The nucleotide sequence of chromosome I from Saccharomyces cerevisiae.</title>
        <authorList>
            <person name="Bussey H."/>
            <person name="Kaback D.B."/>
            <person name="Zhong W.-W."/>
            <person name="Vo D.H."/>
            <person name="Clark M.W."/>
            <person name="Fortin N."/>
            <person name="Hall J."/>
            <person name="Ouellette B.F.F."/>
            <person name="Keng T."/>
            <person name="Barton A.B."/>
            <person name="Su Y."/>
            <person name="Davies C.J."/>
            <person name="Storms R.K."/>
        </authorList>
    </citation>
    <scope>NUCLEOTIDE SEQUENCE [LARGE SCALE GENOMIC DNA]</scope>
    <source>
        <strain>ATCC 204508 / S288c</strain>
    </source>
</reference>
<reference key="2">
    <citation type="journal article" date="2014" name="G3 (Bethesda)">
        <title>The reference genome sequence of Saccharomyces cerevisiae: Then and now.</title>
        <authorList>
            <person name="Engel S.R."/>
            <person name="Dietrich F.S."/>
            <person name="Fisk D.G."/>
            <person name="Binkley G."/>
            <person name="Balakrishnan R."/>
            <person name="Costanzo M.C."/>
            <person name="Dwight S.S."/>
            <person name="Hitz B.C."/>
            <person name="Karra K."/>
            <person name="Nash R.S."/>
            <person name="Weng S."/>
            <person name="Wong E.D."/>
            <person name="Lloyd P."/>
            <person name="Skrzypek M.S."/>
            <person name="Miyasato S.R."/>
            <person name="Simison M."/>
            <person name="Cherry J.M."/>
        </authorList>
    </citation>
    <scope>GENOME REANNOTATION</scope>
    <source>
        <strain>ATCC 204508 / S288c</strain>
    </source>
</reference>
<proteinExistence type="predicted"/>